<comment type="function">
    <text evidence="1 2 6 7">Scaffold protein involved in different aspects of polarized cell differentiation regulating epithelial and neuronal morphogenesis and T-cell polarization (By similarity). Via its interaction with CRTAM, required for the late phase polarization of a subset of CD4+ T-cells, which in turn regulates TCR-mediated proliferation and IFNG and IL22 production (By similarity). Plays a role in cell directional movement, cell orientation, cell sheet organization and Golgi complex polarization at the cell migration front (PubMed:19386766). Promotes epithelial cell layer barrier function via maintaining cell-cell adhesion (PubMed:21849460). Most probably functions in the establishment of apico-basal cell polarity (By similarity). May function in cell proliferation regulating progression from G1 to S phase and as a positive regulator of apoptosis for instance during acinar morphogenesis of the mammary epithelium (By similarity). May regulate cell invasion via MAPK-mediated cell migration and adhesion (By similarity). May play a role in exocytosis and in the targeting of synaptic vesicles to synapses (By similarity). Functions as an activator of Rac GTPase activity (By similarity).</text>
</comment>
<comment type="subunit">
    <text evidence="1 2 6 8">Interacts with UBE3A (By similarity). Interacts with PAK1 and PAK2 (By similarity). Interacts (via PDZ domains) with VANGL2 (By similarity). Interacts (via PDZ domains) with LPP and TRIP6; the interaction is direct (By similarity). Interacts (via PDZ domains) with TJP2 (By similarity). Interacts (via PDZ domains) with APC; may mediate APC targeting to adherens junctions of epithelial cells (By similarity). Interacts (via PDZ domains) with TSHR; regulates TSHR trafficking and function (By similarity). Interacts with ARHGEF7 and GIT1; interacts directly with ARHGEF7 (By similarity). Interacts with CTNNB1 (By similarity). Interacts with MAPK12 (By similarity). Interacts (via PDZ domains 1 and 3) with MCC (By similarity). Interacts with DLG5 (By similarity). Interacts with STK4/MST1 and LATS1 in the presence of DLG5 (By similarity). Interacts (via PDZ domain 3) with CRTAM (via PDZ-binding motif); the interaction promotes CRTAM and SCRIB polarization in a subset of CD4+ T-cells (By similarity). Interacts with YES1, when YES1 is in a closed conformation; the interaction facilitates YES1 autophosphorylation (PubMed:33730553). Interacts (via PDZ domains) with VIM; the interaction protects SCRIB from proteasomal degradation and facilitates SCRIB localization to intermediate filaments, the interaction is reduced by cell contact inhibition (PubMed:19386766).</text>
</comment>
<comment type="subcellular location">
    <subcellularLocation>
        <location evidence="6 8">Cell membrane</location>
        <topology evidence="2">Peripheral membrane protein</topology>
    </subcellularLocation>
    <subcellularLocation>
        <location evidence="8">Cell junction</location>
    </subcellularLocation>
    <subcellularLocation>
        <location evidence="1">Cell junction</location>
        <location evidence="1">Adherens junction</location>
    </subcellularLocation>
    <subcellularLocation>
        <location evidence="1">Cell projection</location>
        <location evidence="1">Lamellipodium</location>
    </subcellularLocation>
    <subcellularLocation>
        <location evidence="6 8">Cytoplasm</location>
    </subcellularLocation>
    <subcellularLocation>
        <location evidence="1">Postsynapse</location>
    </subcellularLocation>
    <subcellularLocation>
        <location evidence="1">Presynapse</location>
    </subcellularLocation>
    <text evidence="1 2 6 8">Targeting to cell-cell junctions which is CDH1-dependent is required for the pro-apoptotic activity (By similarity). In a subset of CD4+ T-cells, colocalizes with CRTAM at the immunological synapse during the late phase of T-cell activation (By similarity). Localized to small puncta throughout the cytoplasm and cell membrane when in the presence of SNAIL1 (PubMed:33730553). Localized along the length of perinuclear emanating vimentin bundles and at vimentin-positive fibrils at the cell periphery (PubMed:19386766). Localized to the lateral plasma membrane during the establishment and maturation of cell-cell contacts (PubMed:19386766).</text>
</comment>
<comment type="PTM">
    <text evidence="1">Ubiquitinated; targeted for UBE3A-dependent multiubiquitination and degraded.</text>
</comment>
<comment type="PTM">
    <text evidence="1">Palmitoylated (By similarity). Could be depalmitoylated by LYPLA1 and/or LYPLA2. Palmitoylation of SCRIB by ZDHHC7 is required for its localization to cell-cell junctions, function in the establishement of epithelial cell polarity and the regulation of downstream signaling pathways important for epithelial cell differentiation (By similarity).</text>
</comment>
<comment type="similarity">
    <text evidence="9">Belongs to the LAP (LRR and PDZ) protein family.</text>
</comment>
<evidence type="ECO:0000250" key="1">
    <source>
        <dbReference type="UniProtKB" id="Q14160"/>
    </source>
</evidence>
<evidence type="ECO:0000250" key="2">
    <source>
        <dbReference type="UniProtKB" id="Q80U72"/>
    </source>
</evidence>
<evidence type="ECO:0000255" key="3"/>
<evidence type="ECO:0000255" key="4">
    <source>
        <dbReference type="PROSITE-ProRule" id="PRU00143"/>
    </source>
</evidence>
<evidence type="ECO:0000256" key="5">
    <source>
        <dbReference type="SAM" id="MobiDB-lite"/>
    </source>
</evidence>
<evidence type="ECO:0000269" key="6">
    <source>
    </source>
</evidence>
<evidence type="ECO:0000269" key="7">
    <source>
    </source>
</evidence>
<evidence type="ECO:0000269" key="8">
    <source>
    </source>
</evidence>
<evidence type="ECO:0000305" key="9"/>
<evidence type="ECO:0000312" key="10">
    <source>
        <dbReference type="Proteomes" id="UP000002254"/>
    </source>
</evidence>
<accession>A0A8P0N4K0</accession>
<accession>A0A8I3S299</accession>
<organism evidence="10">
    <name type="scientific">Canis lupus familiaris</name>
    <name type="common">Dog</name>
    <name type="synonym">Canis familiaris</name>
    <dbReference type="NCBI Taxonomy" id="9615"/>
    <lineage>
        <taxon>Eukaryota</taxon>
        <taxon>Metazoa</taxon>
        <taxon>Chordata</taxon>
        <taxon>Craniata</taxon>
        <taxon>Vertebrata</taxon>
        <taxon>Euteleostomi</taxon>
        <taxon>Mammalia</taxon>
        <taxon>Eutheria</taxon>
        <taxon>Laurasiatheria</taxon>
        <taxon>Carnivora</taxon>
        <taxon>Caniformia</taxon>
        <taxon>Canidae</taxon>
        <taxon>Canis</taxon>
    </lineage>
</organism>
<sequence length="1614" mass="173907">MLKCIPLWRCNRHVESVDKRHCSLQAVPEEIYRYSRSLEELLLDANQLRELPKPFFRLLNLRKLGLSDNEIQRLPPEVANFMQLVELDVSRNDIPEIPESIKFCKALEIADFSGNPLSRLPEGFTQLRSLAHLALNDVSLQALPGDVGNLANLVTLELRENLLKSLPSSLSFLVKLEQLDLGGNELEVLPDTLGALPNLRELWLDRNQLSALPPELGNLRRLVCLDVSENRLEELPAELGGLLLLTDLLLSQNLLQRLPDGIGQLKQLSILKVDQNRLCEVTEAIGDCENLSELILTENLLTALPRSLGKLTKLTNLNADRNRLEVLPPEIGGCAALSVLSLRDNRLATLPAELAHTAELHVLDVAGNRLQSLPFALTHLNLKALWLAENQAQPMLRFQTEDDAQTGEKVLTCYLLPQQPPPSLEESGLQSSPSESWSDAPPSRVSVIQFLEVPMCSDDAEGAAAEKRGLQRRATPHPSELKVMKRGVEERRGEAYSWKPESRLPSPLEEDKRLSTESGLSEDSQPSTGTASQGEPEGSLADTQGLSQQEAAPNAQEEAVEEETYEEPTVRFAEDTLLLPPAGEDGESEEGQLEAPWPLPGGRQRLIRKDTPHYKKHFKISKLPQPEAVVALLQGAQPDGEGPAGAGGWHNGPHTPWAPRAEEEDEEDEEEDEEEEEVAVAEEDKEEAVVSAPSIKGVSFDQANNLLIEPARIEEEELTLTIVRQTGGLGISIAGGKGSTPYKGDDEGIFISRVSEEGPAAQAGVRVGDKLLEVNGVALHGAEHHQAVEALRGAGTTVQMRLWRERMVEPENAVTVTPLRPEDDYSPRERRGAGLRLPLLQPEAAGPLRQRHVACLVRSEKGLGFSIAGGKGSTPYRAGDGGIFISRIAEGGAAHRAGTLQVGDRVLSINGVDMTEARHDHAVSLLTAASPTIALLLEREAGGPLPPSPLPHSPPPPVTAPSTVVTASPGESGPLRLAPSLLAATLEGPYPVEEICLPRAGGPLGLSIVGGSDHSSHPFGIQEPGVFISKVLPRGLAARSGLRVGDRILAVNGQDIREATHQEAVSALLRPCLELVLLVRRDPPPPGMRELCIQKAPGEKLGISVRGGAKGHAGNPCDPTDEGIFISKVSPTGAAGRDGRLRVGLRLLEVNQQSLLGLTHGEAVQLLRSVGDTLTVLVCDGFDTSTVAPAEVSPGVIANPFAAGVGRRNSLESVSSIDRELSPEGCGKEKEPPGPTPQWGLEAMVPPGTTGGKMAEGPHSSSCQQPPSPPSPDTLPTNVKQAYRTFAAVPGPHPLQDTPAQPPTPGPMASPEQLSFRERQKYFELEVRMPQAEGPPKRVSLVGADDLRKMQEEEARKLQQKRAQLMREAEDGALSLDLDGEAPDDEEPEEPPPWAGPAAGLSPSSPQPLGGGAPVRTAKAERRHQERLRVQSPELSTPLPDRALSPAERRALEAEKRALWRAARMKSLEQDALRAQMVLSKSQEGRSRRGPLERLAEAPSPAPTPSPTPVEDLGLQTSTSPGRLALSGRKFDYRVFAALPSSRPVCELQSPDFAEELRSLEPSPSPGLQEEDGEVAMVLLGRPSPGTVGPEEVTLCSSRRPVRPGRRGLGPVPS</sequence>
<feature type="chain" id="PRO_0000460944" description="Protein scribble homolog">
    <location>
        <begin position="1"/>
        <end position="1614"/>
    </location>
</feature>
<feature type="repeat" description="LRR 1" evidence="3">
    <location>
        <begin position="11"/>
        <end position="34"/>
    </location>
</feature>
<feature type="repeat" description="LRR 2" evidence="3">
    <location>
        <begin position="35"/>
        <end position="58"/>
    </location>
</feature>
<feature type="repeat" description="LRR 3" evidence="3">
    <location>
        <begin position="59"/>
        <end position="81"/>
    </location>
</feature>
<feature type="repeat" description="LRR 4" evidence="3">
    <location>
        <begin position="83"/>
        <end position="105"/>
    </location>
</feature>
<feature type="repeat" description="LRR 5" evidence="3">
    <location>
        <begin position="107"/>
        <end position="127"/>
    </location>
</feature>
<feature type="repeat" description="LRR 6" evidence="3">
    <location>
        <begin position="128"/>
        <end position="150"/>
    </location>
</feature>
<feature type="repeat" description="LRR 7" evidence="3">
    <location>
        <begin position="151"/>
        <end position="173"/>
    </location>
</feature>
<feature type="repeat" description="LRR 8" evidence="3">
    <location>
        <begin position="174"/>
        <end position="196"/>
    </location>
</feature>
<feature type="repeat" description="LRR 9" evidence="3">
    <location>
        <begin position="197"/>
        <end position="219"/>
    </location>
</feature>
<feature type="repeat" description="LRR 10" evidence="3">
    <location>
        <begin position="221"/>
        <end position="242"/>
    </location>
</feature>
<feature type="repeat" description="LRR 11" evidence="3">
    <location>
        <begin position="243"/>
        <end position="265"/>
    </location>
</feature>
<feature type="repeat" description="LRR 12" evidence="3">
    <location>
        <begin position="267"/>
        <end position="288"/>
    </location>
</feature>
<feature type="repeat" description="LRR 13" evidence="3">
    <location>
        <begin position="289"/>
        <end position="311"/>
    </location>
</feature>
<feature type="repeat" description="LRR 14" evidence="3">
    <location>
        <begin position="312"/>
        <end position="334"/>
    </location>
</feature>
<feature type="repeat" description="LRR 15" evidence="3">
    <location>
        <begin position="336"/>
        <end position="357"/>
    </location>
</feature>
<feature type="repeat" description="LRR 16" evidence="3">
    <location>
        <begin position="359"/>
        <end position="380"/>
    </location>
</feature>
<feature type="repeat" description="LRR 17" evidence="3">
    <location>
        <begin position="382"/>
        <end position="405"/>
    </location>
</feature>
<feature type="domain" description="PDZ 1" evidence="4">
    <location>
        <begin position="719"/>
        <end position="806"/>
    </location>
</feature>
<feature type="domain" description="PDZ 2" evidence="4">
    <location>
        <begin position="853"/>
        <end position="941"/>
    </location>
</feature>
<feature type="domain" description="PDZ 3" evidence="4">
    <location>
        <begin position="994"/>
        <end position="1083"/>
    </location>
</feature>
<feature type="domain" description="PDZ 4" evidence="4">
    <location>
        <begin position="1090"/>
        <end position="1178"/>
    </location>
</feature>
<feature type="region of interest" description="Sufficient for targeting to adherens junction and to inhibit cell proliferation" evidence="1">
    <location>
        <begin position="1"/>
        <end position="809"/>
    </location>
</feature>
<feature type="region of interest" description="Disordered" evidence="5">
    <location>
        <begin position="417"/>
        <end position="441"/>
    </location>
</feature>
<feature type="region of interest" description="Disordered" evidence="5">
    <location>
        <begin position="462"/>
        <end position="608"/>
    </location>
</feature>
<feature type="region of interest" description="Disordered" evidence="5">
    <location>
        <begin position="636"/>
        <end position="692"/>
    </location>
</feature>
<feature type="region of interest" description="Interaction with ARHGEF7" evidence="1">
    <location>
        <begin position="708"/>
        <end position="1219"/>
    </location>
</feature>
<feature type="region of interest" description="Required for interaction with VIM" evidence="1">
    <location>
        <begin position="719"/>
        <end position="1184"/>
    </location>
</feature>
<feature type="region of interest" description="Disordered" evidence="5">
    <location>
        <begin position="940"/>
        <end position="971"/>
    </location>
</feature>
<feature type="region of interest" description="Disordered" evidence="5">
    <location>
        <begin position="1214"/>
        <end position="1448"/>
    </location>
</feature>
<feature type="region of interest" description="Disordered" evidence="5">
    <location>
        <begin position="1476"/>
        <end position="1524"/>
    </location>
</feature>
<feature type="region of interest" description="Disordered" evidence="5">
    <location>
        <begin position="1581"/>
        <end position="1614"/>
    </location>
</feature>
<feature type="coiled-coil region" evidence="3">
    <location>
        <begin position="664"/>
        <end position="691"/>
    </location>
</feature>
<feature type="coiled-coil region" evidence="3">
    <location>
        <begin position="1341"/>
        <end position="1368"/>
    </location>
</feature>
<feature type="compositionally biased region" description="Polar residues" evidence="5">
    <location>
        <begin position="428"/>
        <end position="437"/>
    </location>
</feature>
<feature type="compositionally biased region" description="Basic and acidic residues" evidence="5">
    <location>
        <begin position="479"/>
        <end position="494"/>
    </location>
</feature>
<feature type="compositionally biased region" description="Polar residues" evidence="5">
    <location>
        <begin position="516"/>
        <end position="533"/>
    </location>
</feature>
<feature type="compositionally biased region" description="Low complexity" evidence="5">
    <location>
        <begin position="548"/>
        <end position="557"/>
    </location>
</feature>
<feature type="compositionally biased region" description="Acidic residues" evidence="5">
    <location>
        <begin position="662"/>
        <end position="686"/>
    </location>
</feature>
<feature type="compositionally biased region" description="Pro residues" evidence="5">
    <location>
        <begin position="944"/>
        <end position="959"/>
    </location>
</feature>
<feature type="compositionally biased region" description="Low complexity" evidence="5">
    <location>
        <begin position="960"/>
        <end position="969"/>
    </location>
</feature>
<feature type="compositionally biased region" description="Basic and acidic residues" evidence="5">
    <location>
        <begin position="1217"/>
        <end position="1232"/>
    </location>
</feature>
<feature type="compositionally biased region" description="Basic and acidic residues" evidence="5">
    <location>
        <begin position="1315"/>
        <end position="1327"/>
    </location>
</feature>
<feature type="compositionally biased region" description="Basic and acidic residues" evidence="5">
    <location>
        <begin position="1345"/>
        <end position="1357"/>
    </location>
</feature>
<feature type="compositionally biased region" description="Acidic residues" evidence="5">
    <location>
        <begin position="1378"/>
        <end position="1390"/>
    </location>
</feature>
<feature type="compositionally biased region" description="Low complexity" evidence="5">
    <location>
        <begin position="1396"/>
        <end position="1408"/>
    </location>
</feature>
<feature type="compositionally biased region" description="Basic and acidic residues" evidence="5">
    <location>
        <begin position="1418"/>
        <end position="1429"/>
    </location>
</feature>
<feature type="compositionally biased region" description="Basic and acidic residues" evidence="5">
    <location>
        <begin position="1483"/>
        <end position="1496"/>
    </location>
</feature>
<feature type="modified residue" description="Phosphoserine" evidence="1">
    <location>
        <position position="37"/>
    </location>
</feature>
<feature type="modified residue" description="Phosphothreonine" evidence="1">
    <location>
        <position position="378"/>
    </location>
</feature>
<feature type="modified residue" description="Phosphothreonine" evidence="1">
    <location>
        <position position="475"/>
    </location>
</feature>
<feature type="modified residue" description="Phosphoserine" evidence="1">
    <location>
        <position position="699"/>
    </location>
</feature>
<feature type="modified residue" description="Phosphoserine" evidence="1">
    <location>
        <position position="755"/>
    </location>
</feature>
<feature type="modified residue" description="Phosphothreonine" evidence="1">
    <location>
        <position position="817"/>
    </location>
</feature>
<feature type="modified residue" description="Phosphoserine" evidence="1">
    <location>
        <position position="826"/>
    </location>
</feature>
<feature type="modified residue" description="Phosphoserine" evidence="1">
    <location>
        <position position="866"/>
    </location>
</feature>
<feature type="modified residue" description="Phosphoserine" evidence="1">
    <location>
        <position position="930"/>
    </location>
</feature>
<feature type="modified residue" description="Phosphoserine" evidence="1">
    <location>
        <position position="1130"/>
    </location>
</feature>
<feature type="modified residue" description="Phosphoserine" evidence="1">
    <location>
        <position position="1210"/>
    </location>
</feature>
<feature type="modified residue" description="Phosphoserine" evidence="1">
    <location>
        <position position="1213"/>
    </location>
</feature>
<feature type="modified residue" description="Phosphoserine" evidence="1">
    <location>
        <position position="1216"/>
    </location>
</feature>
<feature type="modified residue" description="Phosphoserine" evidence="1">
    <location>
        <position position="1222"/>
    </location>
</feature>
<feature type="modified residue" description="Phosphoserine" evidence="1">
    <location>
        <position position="1260"/>
    </location>
</feature>
<feature type="modified residue" description="Phosphoserine" evidence="1">
    <location>
        <position position="1268"/>
    </location>
</feature>
<feature type="modified residue" description="Phosphoserine" evidence="1">
    <location>
        <position position="1271"/>
    </location>
</feature>
<feature type="modified residue" description="Phosphothreonine" evidence="1">
    <location>
        <position position="1304"/>
    </location>
</feature>
<feature type="modified residue" description="Phosphoserine" evidence="1">
    <location>
        <position position="1310"/>
    </location>
</feature>
<feature type="modified residue" description="Phosphoserine" evidence="1">
    <location>
        <position position="1340"/>
    </location>
</feature>
<feature type="modified residue" description="Phosphoserine" evidence="1">
    <location>
        <position position="1402"/>
    </location>
</feature>
<feature type="modified residue" description="Phosphoserine" evidence="1">
    <location>
        <position position="1405"/>
    </location>
</feature>
<feature type="modified residue" description="Phosphoserine" evidence="1">
    <location>
        <position position="1432"/>
    </location>
</feature>
<feature type="modified residue" description="Phosphoserine" evidence="1">
    <location>
        <position position="1445"/>
    </location>
</feature>
<feature type="modified residue" description="Phosphoserine" evidence="1">
    <location>
        <position position="1467"/>
    </location>
</feature>
<feature type="modified residue" description="Phosphoserine" evidence="1">
    <location>
        <position position="1500"/>
    </location>
</feature>
<feature type="modified residue" description="Phosphothreonine" evidence="1">
    <location>
        <position position="1504"/>
    </location>
</feature>
<feature type="modified residue" description="Phosphoserine" evidence="1">
    <location>
        <position position="1506"/>
    </location>
</feature>
<feature type="modified residue" description="Phosphoserine" evidence="1">
    <location>
        <position position="1520"/>
    </location>
</feature>
<feature type="modified residue" description="Phosphoserine" evidence="1">
    <location>
        <position position="1550"/>
    </location>
</feature>
<name>SCRIB_CANLF</name>
<gene>
    <name evidence="2" type="primary">SCRIB</name>
</gene>
<protein>
    <recommendedName>
        <fullName evidence="9">Protein scribble homolog</fullName>
        <shortName evidence="9">Scribble</shortName>
    </recommendedName>
</protein>
<proteinExistence type="evidence at protein level"/>
<reference evidence="10" key="1">
    <citation type="journal article" date="2005" name="Nature">
        <title>Genome sequence, comparative analysis and haplotype structure of the domestic dog.</title>
        <authorList>
            <person name="Lindblad-Toh K."/>
            <person name="Wade C.M."/>
            <person name="Mikkelsen T.S."/>
            <person name="Karlsson E.K."/>
            <person name="Jaffe D.B."/>
            <person name="Kamal M."/>
            <person name="Clamp M."/>
            <person name="Chang J.L."/>
            <person name="Kulbokas E.J. III"/>
            <person name="Zody M.C."/>
            <person name="Mauceli E."/>
            <person name="Xie X."/>
            <person name="Breen M."/>
            <person name="Wayne R.K."/>
            <person name="Ostrander E.A."/>
            <person name="Ponting C.P."/>
            <person name="Galibert F."/>
            <person name="Smith D.R."/>
            <person name="deJong P.J."/>
            <person name="Kirkness E.F."/>
            <person name="Alvarez P."/>
            <person name="Biagi T."/>
            <person name="Brockman W."/>
            <person name="Butler J."/>
            <person name="Chin C.-W."/>
            <person name="Cook A."/>
            <person name="Cuff J."/>
            <person name="Daly M.J."/>
            <person name="DeCaprio D."/>
            <person name="Gnerre S."/>
            <person name="Grabherr M."/>
            <person name="Kellis M."/>
            <person name="Kleber M."/>
            <person name="Bardeleben C."/>
            <person name="Goodstadt L."/>
            <person name="Heger A."/>
            <person name="Hitte C."/>
            <person name="Kim L."/>
            <person name="Koepfli K.-P."/>
            <person name="Parker H.G."/>
            <person name="Pollinger J.P."/>
            <person name="Searle S.M.J."/>
            <person name="Sutter N.B."/>
            <person name="Thomas R."/>
            <person name="Webber C."/>
            <person name="Baldwin J."/>
            <person name="Abebe A."/>
            <person name="Abouelleil A."/>
            <person name="Aftuck L."/>
            <person name="Ait-Zahra M."/>
            <person name="Aldredge T."/>
            <person name="Allen N."/>
            <person name="An P."/>
            <person name="Anderson S."/>
            <person name="Antoine C."/>
            <person name="Arachchi H."/>
            <person name="Aslam A."/>
            <person name="Ayotte L."/>
            <person name="Bachantsang P."/>
            <person name="Barry A."/>
            <person name="Bayul T."/>
            <person name="Benamara M."/>
            <person name="Berlin A."/>
            <person name="Bessette D."/>
            <person name="Blitshteyn B."/>
            <person name="Bloom T."/>
            <person name="Blye J."/>
            <person name="Boguslavskiy L."/>
            <person name="Bonnet C."/>
            <person name="Boukhgalter B."/>
            <person name="Brown A."/>
            <person name="Cahill P."/>
            <person name="Calixte N."/>
            <person name="Camarata J."/>
            <person name="Cheshatsang Y."/>
            <person name="Chu J."/>
            <person name="Citroen M."/>
            <person name="Collymore A."/>
            <person name="Cooke P."/>
            <person name="Dawoe T."/>
            <person name="Daza R."/>
            <person name="Decktor K."/>
            <person name="DeGray S."/>
            <person name="Dhargay N."/>
            <person name="Dooley K."/>
            <person name="Dooley K."/>
            <person name="Dorje P."/>
            <person name="Dorjee K."/>
            <person name="Dorris L."/>
            <person name="Duffey N."/>
            <person name="Dupes A."/>
            <person name="Egbiremolen O."/>
            <person name="Elong R."/>
            <person name="Falk J."/>
            <person name="Farina A."/>
            <person name="Faro S."/>
            <person name="Ferguson D."/>
            <person name="Ferreira P."/>
            <person name="Fisher S."/>
            <person name="FitzGerald M."/>
            <person name="Foley K."/>
            <person name="Foley C."/>
            <person name="Franke A."/>
            <person name="Friedrich D."/>
            <person name="Gage D."/>
            <person name="Garber M."/>
            <person name="Gearin G."/>
            <person name="Giannoukos G."/>
            <person name="Goode T."/>
            <person name="Goyette A."/>
            <person name="Graham J."/>
            <person name="Grandbois E."/>
            <person name="Gyaltsen K."/>
            <person name="Hafez N."/>
            <person name="Hagopian D."/>
            <person name="Hagos B."/>
            <person name="Hall J."/>
            <person name="Healy C."/>
            <person name="Hegarty R."/>
            <person name="Honan T."/>
            <person name="Horn A."/>
            <person name="Houde N."/>
            <person name="Hughes L."/>
            <person name="Hunnicutt L."/>
            <person name="Husby M."/>
            <person name="Jester B."/>
            <person name="Jones C."/>
            <person name="Kamat A."/>
            <person name="Kanga B."/>
            <person name="Kells C."/>
            <person name="Khazanovich D."/>
            <person name="Kieu A.C."/>
            <person name="Kisner P."/>
            <person name="Kumar M."/>
            <person name="Lance K."/>
            <person name="Landers T."/>
            <person name="Lara M."/>
            <person name="Lee W."/>
            <person name="Leger J.-P."/>
            <person name="Lennon N."/>
            <person name="Leuper L."/>
            <person name="LeVine S."/>
            <person name="Liu J."/>
            <person name="Liu X."/>
            <person name="Lokyitsang Y."/>
            <person name="Lokyitsang T."/>
            <person name="Lui A."/>
            <person name="Macdonald J."/>
            <person name="Major J."/>
            <person name="Marabella R."/>
            <person name="Maru K."/>
            <person name="Matthews C."/>
            <person name="McDonough S."/>
            <person name="Mehta T."/>
            <person name="Meldrim J."/>
            <person name="Melnikov A."/>
            <person name="Meneus L."/>
            <person name="Mihalev A."/>
            <person name="Mihova T."/>
            <person name="Miller K."/>
            <person name="Mittelman R."/>
            <person name="Mlenga V."/>
            <person name="Mulrain L."/>
            <person name="Munson G."/>
            <person name="Navidi A."/>
            <person name="Naylor J."/>
            <person name="Nguyen T."/>
            <person name="Nguyen N."/>
            <person name="Nguyen C."/>
            <person name="Nguyen T."/>
            <person name="Nicol R."/>
            <person name="Norbu N."/>
            <person name="Norbu C."/>
            <person name="Novod N."/>
            <person name="Nyima T."/>
            <person name="Olandt P."/>
            <person name="O'Neill B."/>
            <person name="O'Neill K."/>
            <person name="Osman S."/>
            <person name="Oyono L."/>
            <person name="Patti C."/>
            <person name="Perrin D."/>
            <person name="Phunkhang P."/>
            <person name="Pierre F."/>
            <person name="Priest M."/>
            <person name="Rachupka A."/>
            <person name="Raghuraman S."/>
            <person name="Rameau R."/>
            <person name="Ray V."/>
            <person name="Raymond C."/>
            <person name="Rege F."/>
            <person name="Rise C."/>
            <person name="Rogers J."/>
            <person name="Rogov P."/>
            <person name="Sahalie J."/>
            <person name="Settipalli S."/>
            <person name="Sharpe T."/>
            <person name="Shea T."/>
            <person name="Sheehan M."/>
            <person name="Sherpa N."/>
            <person name="Shi J."/>
            <person name="Shih D."/>
            <person name="Sloan J."/>
            <person name="Smith C."/>
            <person name="Sparrow T."/>
            <person name="Stalker J."/>
            <person name="Stange-Thomann N."/>
            <person name="Stavropoulos S."/>
            <person name="Stone C."/>
            <person name="Stone S."/>
            <person name="Sykes S."/>
            <person name="Tchuinga P."/>
            <person name="Tenzing P."/>
            <person name="Tesfaye S."/>
            <person name="Thoulutsang D."/>
            <person name="Thoulutsang Y."/>
            <person name="Topham K."/>
            <person name="Topping I."/>
            <person name="Tsamla T."/>
            <person name="Vassiliev H."/>
            <person name="Venkataraman V."/>
            <person name="Vo A."/>
            <person name="Wangchuk T."/>
            <person name="Wangdi T."/>
            <person name="Weiand M."/>
            <person name="Wilkinson J."/>
            <person name="Wilson A."/>
            <person name="Yadav S."/>
            <person name="Yang S."/>
            <person name="Yang X."/>
            <person name="Young G."/>
            <person name="Yu Q."/>
            <person name="Zainoun J."/>
            <person name="Zembek L."/>
            <person name="Zimmer A."/>
            <person name="Lander E.S."/>
        </authorList>
    </citation>
    <scope>NUCLEOTIDE SEQUENCE [LARGE SCALE GENOMIC DNA]</scope>
    <source>
        <strain evidence="10">Boxer</strain>
    </source>
</reference>
<reference evidence="9" key="2">
    <citation type="journal article" date="2009" name="Mol. Biol. Cell">
        <title>Vimentin regulates scribble activity by protecting it from proteasomal degradation.</title>
        <authorList>
            <person name="Phua D.C."/>
            <person name="Humbert P.O."/>
            <person name="Hunziker W."/>
        </authorList>
    </citation>
    <scope>FUNCTION</scope>
    <scope>INTERACTION WITH VIM</scope>
    <scope>SUBCELLULAR LOCATION</scope>
</reference>
<reference evidence="9" key="3">
    <citation type="journal article" date="2011" name="J. Virol.">
        <title>The avian influenza virus NS1 ESEV PDZ binding motif associates with Dlg1 and Scribble to disrupt cellular tight junctions.</title>
        <authorList>
            <person name="Golebiewski L."/>
            <person name="Liu H."/>
            <person name="Javier R.T."/>
            <person name="Rice A.P."/>
        </authorList>
    </citation>
    <scope>FUNCTION</scope>
</reference>
<reference evidence="9" key="4">
    <citation type="journal article" date="2021" name="Cell Chem. Biol.">
        <title>Scribble sub-cellular localization modulates recruitment of YES1 to regulate YAP1 phosphorylation.</title>
        <authorList>
            <person name="Zhao D."/>
            <person name="Yin Z."/>
            <person name="Soellner M.B."/>
            <person name="Martin B.R."/>
        </authorList>
    </citation>
    <scope>INTERACTION WITH YES1</scope>
    <scope>SUBCELLULAR LOCATION</scope>
</reference>
<keyword id="KW-0965">Cell junction</keyword>
<keyword id="KW-1003">Cell membrane</keyword>
<keyword id="KW-0966">Cell projection</keyword>
<keyword id="KW-0175">Coiled coil</keyword>
<keyword id="KW-0963">Cytoplasm</keyword>
<keyword id="KW-0217">Developmental protein</keyword>
<keyword id="KW-0221">Differentiation</keyword>
<keyword id="KW-0433">Leucine-rich repeat</keyword>
<keyword id="KW-0449">Lipoprotein</keyword>
<keyword id="KW-0472">Membrane</keyword>
<keyword id="KW-0564">Palmitate</keyword>
<keyword id="KW-0597">Phosphoprotein</keyword>
<keyword id="KW-1185">Reference proteome</keyword>
<keyword id="KW-0677">Repeat</keyword>
<keyword id="KW-0770">Synapse</keyword>
<keyword id="KW-0832">Ubl conjugation</keyword>
<dbReference type="RefSeq" id="XP_013974216.3">
    <property type="nucleotide sequence ID" value="XM_014118741.3"/>
</dbReference>
<dbReference type="RefSeq" id="XP_038411697.1">
    <property type="nucleotide sequence ID" value="XM_038555769.1"/>
</dbReference>
<dbReference type="RefSeq" id="XP_038541208.1">
    <property type="nucleotide sequence ID" value="XM_038685280.1"/>
</dbReference>
<dbReference type="SMR" id="A0A8P0N4K0"/>
<dbReference type="IntAct" id="A0A8P0N4K0">
    <property type="interactions" value="1"/>
</dbReference>
<dbReference type="Ensembl" id="ENSCAFT00805020653">
    <property type="protein sequence ID" value="ENSCAFP00805016318"/>
    <property type="gene ID" value="ENSCAFG00805011183"/>
</dbReference>
<dbReference type="Ensembl" id="ENSCAFT00845029674.1">
    <property type="protein sequence ID" value="ENSCAFP00845023308.1"/>
    <property type="gene ID" value="ENSCAFG00845016531.1"/>
</dbReference>
<dbReference type="GeneID" id="100685037"/>
<dbReference type="GeneTree" id="ENSGT00940000154025"/>
<dbReference type="OrthoDB" id="676979at2759"/>
<dbReference type="Proteomes" id="UP000002254">
    <property type="component" value="Unplaced"/>
</dbReference>
<dbReference type="Proteomes" id="UP000694429">
    <property type="component" value="Unplaced"/>
</dbReference>
<dbReference type="Proteomes" id="UP000694542">
    <property type="component" value="Unplaced"/>
</dbReference>
<dbReference type="Proteomes" id="UP000805418">
    <property type="component" value="Chromosome 13"/>
</dbReference>
<dbReference type="GO" id="GO:0005912">
    <property type="term" value="C:adherens junction"/>
    <property type="evidence" value="ECO:0007669"/>
    <property type="project" value="UniProtKB-SubCell"/>
</dbReference>
<dbReference type="GO" id="GO:0030054">
    <property type="term" value="C:cell junction"/>
    <property type="evidence" value="ECO:0000314"/>
    <property type="project" value="UniProtKB"/>
</dbReference>
<dbReference type="GO" id="GO:0005737">
    <property type="term" value="C:cytoplasm"/>
    <property type="evidence" value="ECO:0000314"/>
    <property type="project" value="UniProtKB"/>
</dbReference>
<dbReference type="GO" id="GO:0030027">
    <property type="term" value="C:lamellipodium"/>
    <property type="evidence" value="ECO:0007669"/>
    <property type="project" value="UniProtKB-SubCell"/>
</dbReference>
<dbReference type="GO" id="GO:0005886">
    <property type="term" value="C:plasma membrane"/>
    <property type="evidence" value="ECO:0000314"/>
    <property type="project" value="UniProtKB"/>
</dbReference>
<dbReference type="GO" id="GO:0098794">
    <property type="term" value="C:postsynapse"/>
    <property type="evidence" value="ECO:0007669"/>
    <property type="project" value="UniProtKB-SubCell"/>
</dbReference>
<dbReference type="GO" id="GO:0098793">
    <property type="term" value="C:presynapse"/>
    <property type="evidence" value="ECO:0007669"/>
    <property type="project" value="UniProtKB-SubCell"/>
</dbReference>
<dbReference type="GO" id="GO:0030154">
    <property type="term" value="P:cell differentiation"/>
    <property type="evidence" value="ECO:0007669"/>
    <property type="project" value="UniProtKB-KW"/>
</dbReference>
<dbReference type="GO" id="GO:0010669">
    <property type="term" value="P:epithelial structure maintenance"/>
    <property type="evidence" value="ECO:0000315"/>
    <property type="project" value="UniProtKB"/>
</dbReference>
<dbReference type="GO" id="GO:0010634">
    <property type="term" value="P:positive regulation of epithelial cell migration"/>
    <property type="evidence" value="ECO:0000315"/>
    <property type="project" value="UniProtKB"/>
</dbReference>
<dbReference type="CDD" id="cd06704">
    <property type="entry name" value="PDZ1_Scribble-like"/>
    <property type="match status" value="1"/>
</dbReference>
<dbReference type="CDD" id="cd06703">
    <property type="entry name" value="PDZ2_Scribble-like"/>
    <property type="match status" value="1"/>
</dbReference>
<dbReference type="CDD" id="cd06702">
    <property type="entry name" value="PDZ3_Scribble-like"/>
    <property type="match status" value="1"/>
</dbReference>
<dbReference type="CDD" id="cd06701">
    <property type="entry name" value="PDZ4_Scribble-like"/>
    <property type="match status" value="1"/>
</dbReference>
<dbReference type="FunFam" id="2.30.42.10:FF:000064">
    <property type="entry name" value="protein lap4 isoform X1"/>
    <property type="match status" value="1"/>
</dbReference>
<dbReference type="FunFam" id="2.30.42.10:FF:000041">
    <property type="entry name" value="protein scribble homolog isoform X1"/>
    <property type="match status" value="1"/>
</dbReference>
<dbReference type="FunFam" id="2.30.42.10:FF:000114">
    <property type="entry name" value="protein scribble homolog isoform X1"/>
    <property type="match status" value="1"/>
</dbReference>
<dbReference type="FunFam" id="3.80.10.10:FF:000036">
    <property type="entry name" value="protein scribble homolog isoform X1"/>
    <property type="match status" value="1"/>
</dbReference>
<dbReference type="FunFam" id="3.80.10.10:FF:000072">
    <property type="entry name" value="protein scribble homolog isoform X1"/>
    <property type="match status" value="1"/>
</dbReference>
<dbReference type="FunFam" id="2.30.42.10:FF:000074">
    <property type="entry name" value="protein scribble homolog isoform X2"/>
    <property type="match status" value="1"/>
</dbReference>
<dbReference type="FunFam" id="3.80.10.10:FF:000202">
    <property type="entry name" value="protein scribble homolog isoform X2"/>
    <property type="match status" value="1"/>
</dbReference>
<dbReference type="FunFam" id="3.80.10.10:FF:000064">
    <property type="entry name" value="Scribbled planar cell polarity protein"/>
    <property type="match status" value="1"/>
</dbReference>
<dbReference type="Gene3D" id="2.30.42.10">
    <property type="match status" value="4"/>
</dbReference>
<dbReference type="Gene3D" id="3.80.10.10">
    <property type="entry name" value="Ribonuclease Inhibitor"/>
    <property type="match status" value="4"/>
</dbReference>
<dbReference type="InterPro" id="IPR001611">
    <property type="entry name" value="Leu-rich_rpt"/>
</dbReference>
<dbReference type="InterPro" id="IPR003591">
    <property type="entry name" value="Leu-rich_rpt_typical-subtyp"/>
</dbReference>
<dbReference type="InterPro" id="IPR032675">
    <property type="entry name" value="LRR_dom_sf"/>
</dbReference>
<dbReference type="InterPro" id="IPR055414">
    <property type="entry name" value="LRR_R13L4/SHOC2-like"/>
</dbReference>
<dbReference type="InterPro" id="IPR001478">
    <property type="entry name" value="PDZ"/>
</dbReference>
<dbReference type="InterPro" id="IPR036034">
    <property type="entry name" value="PDZ_sf"/>
</dbReference>
<dbReference type="InterPro" id="IPR050614">
    <property type="entry name" value="Synaptic_Scaffolding_LAP-MAGUK"/>
</dbReference>
<dbReference type="PANTHER" id="PTHR23119">
    <property type="entry name" value="DISCS LARGE"/>
    <property type="match status" value="1"/>
</dbReference>
<dbReference type="PANTHER" id="PTHR23119:SF57">
    <property type="entry name" value="PROTEIN SCRIBBLE HOMOLOG"/>
    <property type="match status" value="1"/>
</dbReference>
<dbReference type="Pfam" id="PF23598">
    <property type="entry name" value="LRR_14"/>
    <property type="match status" value="1"/>
</dbReference>
<dbReference type="Pfam" id="PF13855">
    <property type="entry name" value="LRR_8"/>
    <property type="match status" value="2"/>
</dbReference>
<dbReference type="Pfam" id="PF00595">
    <property type="entry name" value="PDZ"/>
    <property type="match status" value="4"/>
</dbReference>
<dbReference type="SMART" id="SM00364">
    <property type="entry name" value="LRR_BAC"/>
    <property type="match status" value="11"/>
</dbReference>
<dbReference type="SMART" id="SM00369">
    <property type="entry name" value="LRR_TYP"/>
    <property type="match status" value="12"/>
</dbReference>
<dbReference type="SMART" id="SM00228">
    <property type="entry name" value="PDZ"/>
    <property type="match status" value="4"/>
</dbReference>
<dbReference type="SUPFAM" id="SSF52058">
    <property type="entry name" value="L domain-like"/>
    <property type="match status" value="2"/>
</dbReference>
<dbReference type="SUPFAM" id="SSF50156">
    <property type="entry name" value="PDZ domain-like"/>
    <property type="match status" value="4"/>
</dbReference>
<dbReference type="PROSITE" id="PS51450">
    <property type="entry name" value="LRR"/>
    <property type="match status" value="4"/>
</dbReference>
<dbReference type="PROSITE" id="PS50106">
    <property type="entry name" value="PDZ"/>
    <property type="match status" value="4"/>
</dbReference>